<name>RL19_PROMP</name>
<protein>
    <recommendedName>
        <fullName evidence="1">Large ribosomal subunit protein bL19</fullName>
    </recommendedName>
    <alternativeName>
        <fullName evidence="2">50S ribosomal protein L19</fullName>
    </alternativeName>
</protein>
<dbReference type="EMBL" id="BX548174">
    <property type="protein sequence ID" value="CAE18934.1"/>
    <property type="molecule type" value="Genomic_DNA"/>
</dbReference>
<dbReference type="SMR" id="Q7V2K1"/>
<dbReference type="STRING" id="59919.PMM0475"/>
<dbReference type="KEGG" id="pmm:PMM0475"/>
<dbReference type="eggNOG" id="COG0335">
    <property type="taxonomic scope" value="Bacteria"/>
</dbReference>
<dbReference type="HOGENOM" id="CLU_103507_2_0_3"/>
<dbReference type="OrthoDB" id="9803541at2"/>
<dbReference type="Proteomes" id="UP000001026">
    <property type="component" value="Chromosome"/>
</dbReference>
<dbReference type="GO" id="GO:0022625">
    <property type="term" value="C:cytosolic large ribosomal subunit"/>
    <property type="evidence" value="ECO:0007669"/>
    <property type="project" value="TreeGrafter"/>
</dbReference>
<dbReference type="GO" id="GO:0003735">
    <property type="term" value="F:structural constituent of ribosome"/>
    <property type="evidence" value="ECO:0007669"/>
    <property type="project" value="InterPro"/>
</dbReference>
<dbReference type="GO" id="GO:0006412">
    <property type="term" value="P:translation"/>
    <property type="evidence" value="ECO:0007669"/>
    <property type="project" value="UniProtKB-UniRule"/>
</dbReference>
<dbReference type="FunFam" id="2.30.30.790:FF:000001">
    <property type="entry name" value="50S ribosomal protein L19"/>
    <property type="match status" value="1"/>
</dbReference>
<dbReference type="Gene3D" id="2.30.30.790">
    <property type="match status" value="1"/>
</dbReference>
<dbReference type="HAMAP" id="MF_00402">
    <property type="entry name" value="Ribosomal_bL19"/>
    <property type="match status" value="1"/>
</dbReference>
<dbReference type="InterPro" id="IPR001857">
    <property type="entry name" value="Ribosomal_bL19"/>
</dbReference>
<dbReference type="InterPro" id="IPR018257">
    <property type="entry name" value="Ribosomal_bL19_CS"/>
</dbReference>
<dbReference type="InterPro" id="IPR038657">
    <property type="entry name" value="Ribosomal_bL19_sf"/>
</dbReference>
<dbReference type="InterPro" id="IPR008991">
    <property type="entry name" value="Translation_prot_SH3-like_sf"/>
</dbReference>
<dbReference type="NCBIfam" id="TIGR01024">
    <property type="entry name" value="rplS_bact"/>
    <property type="match status" value="1"/>
</dbReference>
<dbReference type="PANTHER" id="PTHR15680:SF9">
    <property type="entry name" value="LARGE RIBOSOMAL SUBUNIT PROTEIN BL19M"/>
    <property type="match status" value="1"/>
</dbReference>
<dbReference type="PANTHER" id="PTHR15680">
    <property type="entry name" value="RIBOSOMAL PROTEIN L19"/>
    <property type="match status" value="1"/>
</dbReference>
<dbReference type="Pfam" id="PF01245">
    <property type="entry name" value="Ribosomal_L19"/>
    <property type="match status" value="1"/>
</dbReference>
<dbReference type="PIRSF" id="PIRSF002191">
    <property type="entry name" value="Ribosomal_L19"/>
    <property type="match status" value="1"/>
</dbReference>
<dbReference type="PRINTS" id="PR00061">
    <property type="entry name" value="RIBOSOMALL19"/>
</dbReference>
<dbReference type="SUPFAM" id="SSF50104">
    <property type="entry name" value="Translation proteins SH3-like domain"/>
    <property type="match status" value="1"/>
</dbReference>
<dbReference type="PROSITE" id="PS01015">
    <property type="entry name" value="RIBOSOMAL_L19"/>
    <property type="match status" value="1"/>
</dbReference>
<comment type="function">
    <text evidence="1">This protein is located at the 30S-50S ribosomal subunit interface and may play a role in the structure and function of the aminoacyl-tRNA binding site.</text>
</comment>
<comment type="similarity">
    <text evidence="1">Belongs to the bacterial ribosomal protein bL19 family.</text>
</comment>
<organism>
    <name type="scientific">Prochlorococcus marinus subsp. pastoris (strain CCMP1986 / NIES-2087 / MED4)</name>
    <dbReference type="NCBI Taxonomy" id="59919"/>
    <lineage>
        <taxon>Bacteria</taxon>
        <taxon>Bacillati</taxon>
        <taxon>Cyanobacteriota</taxon>
        <taxon>Cyanophyceae</taxon>
        <taxon>Synechococcales</taxon>
        <taxon>Prochlorococcaceae</taxon>
        <taxon>Prochlorococcus</taxon>
    </lineage>
</organism>
<keyword id="KW-0687">Ribonucleoprotein</keyword>
<keyword id="KW-0689">Ribosomal protein</keyword>
<evidence type="ECO:0000255" key="1">
    <source>
        <dbReference type="HAMAP-Rule" id="MF_00402"/>
    </source>
</evidence>
<evidence type="ECO:0000305" key="2"/>
<gene>
    <name evidence="1" type="primary">rplS</name>
    <name evidence="1" type="synonym">rpl19</name>
    <name type="ordered locus">PMM0475</name>
</gene>
<feature type="chain" id="PRO_0000163509" description="Large ribosomal subunit protein bL19">
    <location>
        <begin position="1"/>
        <end position="160"/>
    </location>
</feature>
<accession>Q7V2K1</accession>
<proteinExistence type="inferred from homology"/>
<sequence length="160" mass="18513">MIIEHKMAKEKQETELEITNETDTTTELTVEKQGKELIAQTNLSSSNLIKEFEREQLKKQLPEIYVGDTVKVGVKITEGNKERVQPYEGVVIAKRHGGLHQTITVRRIFQGIGVERVFMLHSPQVASLKVERRGKVRRAKLFYLRDRVGKATRVKQRFDR</sequence>
<reference key="1">
    <citation type="journal article" date="2003" name="Nature">
        <title>Genome divergence in two Prochlorococcus ecotypes reflects oceanic niche differentiation.</title>
        <authorList>
            <person name="Rocap G."/>
            <person name="Larimer F.W."/>
            <person name="Lamerdin J.E."/>
            <person name="Malfatti S."/>
            <person name="Chain P."/>
            <person name="Ahlgren N.A."/>
            <person name="Arellano A."/>
            <person name="Coleman M."/>
            <person name="Hauser L."/>
            <person name="Hess W.R."/>
            <person name="Johnson Z.I."/>
            <person name="Land M.L."/>
            <person name="Lindell D."/>
            <person name="Post A.F."/>
            <person name="Regala W."/>
            <person name="Shah M."/>
            <person name="Shaw S.L."/>
            <person name="Steglich C."/>
            <person name="Sullivan M.B."/>
            <person name="Ting C.S."/>
            <person name="Tolonen A."/>
            <person name="Webb E.A."/>
            <person name="Zinser E.R."/>
            <person name="Chisholm S.W."/>
        </authorList>
    </citation>
    <scope>NUCLEOTIDE SEQUENCE [LARGE SCALE GENOMIC DNA]</scope>
    <source>
        <strain>CCMP1986 / NIES-2087 / MED4</strain>
    </source>
</reference>